<proteinExistence type="inferred from homology"/>
<comment type="function">
    <text evidence="1">Part of the MsrPQ system that repairs oxidized periplasmic proteins containing methionine sulfoxide residues (Met-O), using respiratory chain electrons. Thus protects these proteins from oxidative-stress damage caused by reactive species of oxygen and chlorine generated by the host defense mechanisms. MsrPQ is essential for the maintenance of envelope integrity under bleach stress, rescuing a wide series of structurally unrelated periplasmic proteins from methionine oxidation. MsrQ provides electrons for reduction to the reductase catalytic subunit MsrP, using the quinone pool of the respiratory chain.</text>
</comment>
<comment type="cofactor">
    <cofactor evidence="1">
        <name>FMN</name>
        <dbReference type="ChEBI" id="CHEBI:58210"/>
    </cofactor>
    <text evidence="1">Binds 1 FMN per subunit.</text>
</comment>
<comment type="cofactor">
    <cofactor evidence="1">
        <name>heme b</name>
        <dbReference type="ChEBI" id="CHEBI:60344"/>
    </cofactor>
    <text evidence="1">Binds 1 heme b (iron(II)-protoporphyrin IX) group per subunit.</text>
</comment>
<comment type="subunit">
    <text evidence="1">Heterodimer of a catalytic subunit (MsrP) and a heme-binding subunit (MsrQ).</text>
</comment>
<comment type="subcellular location">
    <subcellularLocation>
        <location evidence="1">Cell inner membrane</location>
        <topology evidence="1">Multi-pass membrane protein</topology>
    </subcellularLocation>
</comment>
<comment type="similarity">
    <text evidence="1">Belongs to the MsrQ family.</text>
</comment>
<evidence type="ECO:0000255" key="1">
    <source>
        <dbReference type="HAMAP-Rule" id="MF_01207"/>
    </source>
</evidence>
<protein>
    <recommendedName>
        <fullName evidence="1">Protein-methionine-sulfoxide reductase heme-binding subunit MsrQ</fullName>
    </recommendedName>
    <alternativeName>
        <fullName evidence="1">Flavocytochrome MsrQ</fullName>
    </alternativeName>
</protein>
<gene>
    <name evidence="1" type="primary">msrQ</name>
    <name type="ordered locus">CKO_04663</name>
</gene>
<organism>
    <name type="scientific">Citrobacter koseri (strain ATCC BAA-895 / CDC 4225-83 / SGSC4696)</name>
    <dbReference type="NCBI Taxonomy" id="290338"/>
    <lineage>
        <taxon>Bacteria</taxon>
        <taxon>Pseudomonadati</taxon>
        <taxon>Pseudomonadota</taxon>
        <taxon>Gammaproteobacteria</taxon>
        <taxon>Enterobacterales</taxon>
        <taxon>Enterobacteriaceae</taxon>
        <taxon>Citrobacter</taxon>
    </lineage>
</organism>
<keyword id="KW-0997">Cell inner membrane</keyword>
<keyword id="KW-1003">Cell membrane</keyword>
<keyword id="KW-0249">Electron transport</keyword>
<keyword id="KW-0285">Flavoprotein</keyword>
<keyword id="KW-0288">FMN</keyword>
<keyword id="KW-0349">Heme</keyword>
<keyword id="KW-0408">Iron</keyword>
<keyword id="KW-0472">Membrane</keyword>
<keyword id="KW-0479">Metal-binding</keyword>
<keyword id="KW-1185">Reference proteome</keyword>
<keyword id="KW-0812">Transmembrane</keyword>
<keyword id="KW-1133">Transmembrane helix</keyword>
<keyword id="KW-0813">Transport</keyword>
<feature type="chain" id="PRO_1000085525" description="Protein-methionine-sulfoxide reductase heme-binding subunit MsrQ">
    <location>
        <begin position="1"/>
        <end position="206"/>
    </location>
</feature>
<feature type="transmembrane region" description="Helical" evidence="1">
    <location>
        <begin position="8"/>
        <end position="28"/>
    </location>
</feature>
<feature type="transmembrane region" description="Helical" evidence="1">
    <location>
        <begin position="82"/>
        <end position="102"/>
    </location>
</feature>
<feature type="transmembrane region" description="Helical" evidence="1">
    <location>
        <begin position="116"/>
        <end position="136"/>
    </location>
</feature>
<feature type="transmembrane region" description="Helical" evidence="1">
    <location>
        <begin position="153"/>
        <end position="173"/>
    </location>
</feature>
<reference key="1">
    <citation type="submission" date="2007-08" db="EMBL/GenBank/DDBJ databases">
        <authorList>
            <consortium name="The Citrobacter koseri Genome Sequencing Project"/>
            <person name="McClelland M."/>
            <person name="Sanderson E.K."/>
            <person name="Porwollik S."/>
            <person name="Spieth J."/>
            <person name="Clifton W.S."/>
            <person name="Latreille P."/>
            <person name="Courtney L."/>
            <person name="Wang C."/>
            <person name="Pepin K."/>
            <person name="Bhonagiri V."/>
            <person name="Nash W."/>
            <person name="Johnson M."/>
            <person name="Thiruvilangam P."/>
            <person name="Wilson R."/>
        </authorList>
    </citation>
    <scope>NUCLEOTIDE SEQUENCE [LARGE SCALE GENOMIC DNA]</scope>
    <source>
        <strain>ATCC BAA-895 / CDC 4225-83 / SGSC4696</strain>
    </source>
</reference>
<sequence>MRLTQKQIVWLKVLLHLAGLLPFLWLVWAVNQGGLSADPVKDIQHFTGRTALKFLLATLLVSPLARYAKQPLLIRTRRLLGLWCFAWATLHLTSYALLELGINNLALLGQELITRPYLTLGIISWFILFALTLTSTQAAQRKLGKRWQRLHNFVYLVAILAPIHYLWSVKILSPQPVIYALLALVLLAWRYKTFRQWWRSFAGKML</sequence>
<accession>A8AQF0</accession>
<dbReference type="EMBL" id="CP000822">
    <property type="protein sequence ID" value="ABV15713.1"/>
    <property type="molecule type" value="Genomic_DNA"/>
</dbReference>
<dbReference type="RefSeq" id="WP_012135388.1">
    <property type="nucleotide sequence ID" value="NC_009792.1"/>
</dbReference>
<dbReference type="SMR" id="A8AQF0"/>
<dbReference type="STRING" id="290338.CKO_04663"/>
<dbReference type="GeneID" id="45138191"/>
<dbReference type="KEGG" id="cko:CKO_04663"/>
<dbReference type="HOGENOM" id="CLU_080662_1_0_6"/>
<dbReference type="OrthoDB" id="9788328at2"/>
<dbReference type="Proteomes" id="UP000008148">
    <property type="component" value="Chromosome"/>
</dbReference>
<dbReference type="GO" id="GO:0005886">
    <property type="term" value="C:plasma membrane"/>
    <property type="evidence" value="ECO:0007669"/>
    <property type="project" value="UniProtKB-SubCell"/>
</dbReference>
<dbReference type="GO" id="GO:0009055">
    <property type="term" value="F:electron transfer activity"/>
    <property type="evidence" value="ECO:0007669"/>
    <property type="project" value="UniProtKB-UniRule"/>
</dbReference>
<dbReference type="GO" id="GO:0010181">
    <property type="term" value="F:FMN binding"/>
    <property type="evidence" value="ECO:0007669"/>
    <property type="project" value="UniProtKB-UniRule"/>
</dbReference>
<dbReference type="GO" id="GO:0020037">
    <property type="term" value="F:heme binding"/>
    <property type="evidence" value="ECO:0007669"/>
    <property type="project" value="UniProtKB-UniRule"/>
</dbReference>
<dbReference type="GO" id="GO:0046872">
    <property type="term" value="F:metal ion binding"/>
    <property type="evidence" value="ECO:0007669"/>
    <property type="project" value="UniProtKB-KW"/>
</dbReference>
<dbReference type="GO" id="GO:0016679">
    <property type="term" value="F:oxidoreductase activity, acting on diphenols and related substances as donors"/>
    <property type="evidence" value="ECO:0007669"/>
    <property type="project" value="TreeGrafter"/>
</dbReference>
<dbReference type="GO" id="GO:0030091">
    <property type="term" value="P:protein repair"/>
    <property type="evidence" value="ECO:0007669"/>
    <property type="project" value="UniProtKB-UniRule"/>
</dbReference>
<dbReference type="HAMAP" id="MF_01207">
    <property type="entry name" value="MsrQ"/>
    <property type="match status" value="1"/>
</dbReference>
<dbReference type="InterPro" id="IPR013130">
    <property type="entry name" value="Fe3_Rdtase_TM_dom"/>
</dbReference>
<dbReference type="InterPro" id="IPR022837">
    <property type="entry name" value="MsrQ-like"/>
</dbReference>
<dbReference type="NCBIfam" id="NF003831">
    <property type="entry name" value="PRK05419.1-2"/>
    <property type="match status" value="1"/>
</dbReference>
<dbReference type="NCBIfam" id="NF003832">
    <property type="entry name" value="PRK05419.1-4"/>
    <property type="match status" value="1"/>
</dbReference>
<dbReference type="PANTHER" id="PTHR36964">
    <property type="entry name" value="PROTEIN-METHIONINE-SULFOXIDE REDUCTASE HEME-BINDING SUBUNIT MSRQ"/>
    <property type="match status" value="1"/>
</dbReference>
<dbReference type="PANTHER" id="PTHR36964:SF1">
    <property type="entry name" value="PROTEIN-METHIONINE-SULFOXIDE REDUCTASE HEME-BINDING SUBUNIT MSRQ"/>
    <property type="match status" value="1"/>
</dbReference>
<dbReference type="Pfam" id="PF01794">
    <property type="entry name" value="Ferric_reduct"/>
    <property type="match status" value="1"/>
</dbReference>
<name>MSRQ_CITK8</name>